<sequence length="545" mass="59872">MTTNYIFVTGGVVSSLGKGIAAASLAAILEARGLKVTMMKLDPYINVDPGTMSPTQHGEVFVTEDGAETDLDLGHYERFIRTKMTKRNNFTAGRVYSDVLAKERRGDYLGATIQVIPHITNDIKDRVINGSQGHDVAIVEVGGTVGDIESLPFMEAIRQLAVEIGRERAMFMHLTLVPYLAAAGEVKTKPTQHSVKELLSIGIQPDILVCRSDRMIPANERKKIALFCNVPEKAVISMKDVDSIYKIPQLIKSQGLDDLVCARFGINAPEADLSEWEQVIYEEANPTGEVTIGMVGKYIELPDAYKSVNEALKHAGLKNRLSVNIKYVDSQDVETKGVEVLQGLDAILVPGGFGDRGIEGKILAAKYARENKVPYLGICLGMQVALIEYARNVAGMEGAHSTEFNKDTKYPVVGLITEWVDSEGNVEERTESSNLGGTMRLGSQLCHLAKGTKARELYGSDTIHERHRHRYEVNNNLRPQIEKAGLKVSGLSADKKLVEMIENPNHPWFVAAQFHPEFTSTPRDGHPLFSGFIKAAGENARGELK</sequence>
<gene>
    <name evidence="1" type="primary">pyrG</name>
    <name type="ordered locus">VV2819</name>
</gene>
<evidence type="ECO:0000255" key="1">
    <source>
        <dbReference type="HAMAP-Rule" id="MF_01227"/>
    </source>
</evidence>
<evidence type="ECO:0000305" key="2"/>
<protein>
    <recommendedName>
        <fullName evidence="1">CTP synthase</fullName>
        <ecNumber evidence="1">6.3.4.2</ecNumber>
    </recommendedName>
    <alternativeName>
        <fullName evidence="1">Cytidine 5'-triphosphate synthase</fullName>
    </alternativeName>
    <alternativeName>
        <fullName evidence="1">Cytidine triphosphate synthetase</fullName>
        <shortName evidence="1">CTP synthetase</shortName>
        <shortName evidence="1">CTPS</shortName>
    </alternativeName>
    <alternativeName>
        <fullName evidence="1">UTP--ammonia ligase</fullName>
    </alternativeName>
</protein>
<accession>Q7MHQ0</accession>
<proteinExistence type="inferred from homology"/>
<dbReference type="EC" id="6.3.4.2" evidence="1"/>
<dbReference type="EMBL" id="BA000037">
    <property type="protein sequence ID" value="BAC95583.1"/>
    <property type="status" value="ALT_INIT"/>
    <property type="molecule type" value="Genomic_DNA"/>
</dbReference>
<dbReference type="RefSeq" id="WP_011079512.1">
    <property type="nucleotide sequence ID" value="NC_005139.1"/>
</dbReference>
<dbReference type="SMR" id="Q7MHQ0"/>
<dbReference type="STRING" id="672.VV93_v1c25280"/>
<dbReference type="MEROPS" id="C26.964"/>
<dbReference type="KEGG" id="vvy:VV2819"/>
<dbReference type="eggNOG" id="COG0504">
    <property type="taxonomic scope" value="Bacteria"/>
</dbReference>
<dbReference type="HOGENOM" id="CLU_011675_5_0_6"/>
<dbReference type="UniPathway" id="UPA00159">
    <property type="reaction ID" value="UER00277"/>
</dbReference>
<dbReference type="Proteomes" id="UP000002675">
    <property type="component" value="Chromosome I"/>
</dbReference>
<dbReference type="GO" id="GO:0005829">
    <property type="term" value="C:cytosol"/>
    <property type="evidence" value="ECO:0007669"/>
    <property type="project" value="TreeGrafter"/>
</dbReference>
<dbReference type="GO" id="GO:0005524">
    <property type="term" value="F:ATP binding"/>
    <property type="evidence" value="ECO:0007669"/>
    <property type="project" value="UniProtKB-KW"/>
</dbReference>
<dbReference type="GO" id="GO:0003883">
    <property type="term" value="F:CTP synthase activity"/>
    <property type="evidence" value="ECO:0007669"/>
    <property type="project" value="UniProtKB-UniRule"/>
</dbReference>
<dbReference type="GO" id="GO:0004359">
    <property type="term" value="F:glutaminase activity"/>
    <property type="evidence" value="ECO:0007669"/>
    <property type="project" value="RHEA"/>
</dbReference>
<dbReference type="GO" id="GO:0042802">
    <property type="term" value="F:identical protein binding"/>
    <property type="evidence" value="ECO:0007669"/>
    <property type="project" value="TreeGrafter"/>
</dbReference>
<dbReference type="GO" id="GO:0046872">
    <property type="term" value="F:metal ion binding"/>
    <property type="evidence" value="ECO:0007669"/>
    <property type="project" value="UniProtKB-KW"/>
</dbReference>
<dbReference type="GO" id="GO:0044210">
    <property type="term" value="P:'de novo' CTP biosynthetic process"/>
    <property type="evidence" value="ECO:0007669"/>
    <property type="project" value="UniProtKB-UniRule"/>
</dbReference>
<dbReference type="GO" id="GO:0019856">
    <property type="term" value="P:pyrimidine nucleobase biosynthetic process"/>
    <property type="evidence" value="ECO:0007669"/>
    <property type="project" value="TreeGrafter"/>
</dbReference>
<dbReference type="CDD" id="cd03113">
    <property type="entry name" value="CTPS_N"/>
    <property type="match status" value="1"/>
</dbReference>
<dbReference type="CDD" id="cd01746">
    <property type="entry name" value="GATase1_CTP_Synthase"/>
    <property type="match status" value="1"/>
</dbReference>
<dbReference type="FunFam" id="3.40.50.300:FF:000009">
    <property type="entry name" value="CTP synthase"/>
    <property type="match status" value="1"/>
</dbReference>
<dbReference type="FunFam" id="3.40.50.880:FF:000002">
    <property type="entry name" value="CTP synthase"/>
    <property type="match status" value="1"/>
</dbReference>
<dbReference type="Gene3D" id="3.40.50.880">
    <property type="match status" value="1"/>
</dbReference>
<dbReference type="Gene3D" id="3.40.50.300">
    <property type="entry name" value="P-loop containing nucleotide triphosphate hydrolases"/>
    <property type="match status" value="1"/>
</dbReference>
<dbReference type="HAMAP" id="MF_01227">
    <property type="entry name" value="PyrG"/>
    <property type="match status" value="1"/>
</dbReference>
<dbReference type="InterPro" id="IPR029062">
    <property type="entry name" value="Class_I_gatase-like"/>
</dbReference>
<dbReference type="InterPro" id="IPR004468">
    <property type="entry name" value="CTP_synthase"/>
</dbReference>
<dbReference type="InterPro" id="IPR017456">
    <property type="entry name" value="CTP_synthase_N"/>
</dbReference>
<dbReference type="InterPro" id="IPR017926">
    <property type="entry name" value="GATASE"/>
</dbReference>
<dbReference type="InterPro" id="IPR033828">
    <property type="entry name" value="GATase1_CTP_Synthase"/>
</dbReference>
<dbReference type="InterPro" id="IPR027417">
    <property type="entry name" value="P-loop_NTPase"/>
</dbReference>
<dbReference type="NCBIfam" id="NF003792">
    <property type="entry name" value="PRK05380.1"/>
    <property type="match status" value="1"/>
</dbReference>
<dbReference type="NCBIfam" id="TIGR00337">
    <property type="entry name" value="PyrG"/>
    <property type="match status" value="1"/>
</dbReference>
<dbReference type="PANTHER" id="PTHR11550">
    <property type="entry name" value="CTP SYNTHASE"/>
    <property type="match status" value="1"/>
</dbReference>
<dbReference type="PANTHER" id="PTHR11550:SF0">
    <property type="entry name" value="CTP SYNTHASE-RELATED"/>
    <property type="match status" value="1"/>
</dbReference>
<dbReference type="Pfam" id="PF06418">
    <property type="entry name" value="CTP_synth_N"/>
    <property type="match status" value="1"/>
</dbReference>
<dbReference type="Pfam" id="PF00117">
    <property type="entry name" value="GATase"/>
    <property type="match status" value="1"/>
</dbReference>
<dbReference type="SUPFAM" id="SSF52317">
    <property type="entry name" value="Class I glutamine amidotransferase-like"/>
    <property type="match status" value="1"/>
</dbReference>
<dbReference type="SUPFAM" id="SSF52540">
    <property type="entry name" value="P-loop containing nucleoside triphosphate hydrolases"/>
    <property type="match status" value="1"/>
</dbReference>
<dbReference type="PROSITE" id="PS51273">
    <property type="entry name" value="GATASE_TYPE_1"/>
    <property type="match status" value="1"/>
</dbReference>
<feature type="chain" id="PRO_0000138249" description="CTP synthase">
    <location>
        <begin position="1"/>
        <end position="545"/>
    </location>
</feature>
<feature type="domain" description="Glutamine amidotransferase type-1" evidence="1">
    <location>
        <begin position="291"/>
        <end position="542"/>
    </location>
</feature>
<feature type="region of interest" description="Amidoligase domain" evidence="1">
    <location>
        <begin position="1"/>
        <end position="266"/>
    </location>
</feature>
<feature type="active site" description="Nucleophile; for glutamine hydrolysis" evidence="1">
    <location>
        <position position="379"/>
    </location>
</feature>
<feature type="active site" evidence="1">
    <location>
        <position position="515"/>
    </location>
</feature>
<feature type="active site" evidence="1">
    <location>
        <position position="517"/>
    </location>
</feature>
<feature type="binding site" evidence="1">
    <location>
        <position position="14"/>
    </location>
    <ligand>
        <name>CTP</name>
        <dbReference type="ChEBI" id="CHEBI:37563"/>
        <note>allosteric inhibitor</note>
    </ligand>
</feature>
<feature type="binding site" evidence="1">
    <location>
        <position position="14"/>
    </location>
    <ligand>
        <name>UTP</name>
        <dbReference type="ChEBI" id="CHEBI:46398"/>
    </ligand>
</feature>
<feature type="binding site" evidence="1">
    <location>
        <begin position="15"/>
        <end position="20"/>
    </location>
    <ligand>
        <name>ATP</name>
        <dbReference type="ChEBI" id="CHEBI:30616"/>
    </ligand>
</feature>
<feature type="binding site" evidence="1">
    <location>
        <position position="72"/>
    </location>
    <ligand>
        <name>ATP</name>
        <dbReference type="ChEBI" id="CHEBI:30616"/>
    </ligand>
</feature>
<feature type="binding site" evidence="1">
    <location>
        <position position="72"/>
    </location>
    <ligand>
        <name>Mg(2+)</name>
        <dbReference type="ChEBI" id="CHEBI:18420"/>
    </ligand>
</feature>
<feature type="binding site" evidence="1">
    <location>
        <position position="140"/>
    </location>
    <ligand>
        <name>Mg(2+)</name>
        <dbReference type="ChEBI" id="CHEBI:18420"/>
    </ligand>
</feature>
<feature type="binding site" evidence="1">
    <location>
        <begin position="147"/>
        <end position="149"/>
    </location>
    <ligand>
        <name>CTP</name>
        <dbReference type="ChEBI" id="CHEBI:37563"/>
        <note>allosteric inhibitor</note>
    </ligand>
</feature>
<feature type="binding site" evidence="1">
    <location>
        <begin position="187"/>
        <end position="192"/>
    </location>
    <ligand>
        <name>CTP</name>
        <dbReference type="ChEBI" id="CHEBI:37563"/>
        <note>allosteric inhibitor</note>
    </ligand>
</feature>
<feature type="binding site" evidence="1">
    <location>
        <begin position="187"/>
        <end position="192"/>
    </location>
    <ligand>
        <name>UTP</name>
        <dbReference type="ChEBI" id="CHEBI:46398"/>
    </ligand>
</feature>
<feature type="binding site" evidence="1">
    <location>
        <position position="223"/>
    </location>
    <ligand>
        <name>CTP</name>
        <dbReference type="ChEBI" id="CHEBI:37563"/>
        <note>allosteric inhibitor</note>
    </ligand>
</feature>
<feature type="binding site" evidence="1">
    <location>
        <position position="223"/>
    </location>
    <ligand>
        <name>UTP</name>
        <dbReference type="ChEBI" id="CHEBI:46398"/>
    </ligand>
</feature>
<feature type="binding site" evidence="1">
    <location>
        <begin position="239"/>
        <end position="241"/>
    </location>
    <ligand>
        <name>ATP</name>
        <dbReference type="ChEBI" id="CHEBI:30616"/>
    </ligand>
</feature>
<feature type="binding site" evidence="1">
    <location>
        <position position="352"/>
    </location>
    <ligand>
        <name>L-glutamine</name>
        <dbReference type="ChEBI" id="CHEBI:58359"/>
    </ligand>
</feature>
<feature type="binding site" evidence="1">
    <location>
        <begin position="380"/>
        <end position="383"/>
    </location>
    <ligand>
        <name>L-glutamine</name>
        <dbReference type="ChEBI" id="CHEBI:58359"/>
    </ligand>
</feature>
<feature type="binding site" evidence="1">
    <location>
        <position position="403"/>
    </location>
    <ligand>
        <name>L-glutamine</name>
        <dbReference type="ChEBI" id="CHEBI:58359"/>
    </ligand>
</feature>
<feature type="binding site" evidence="1">
    <location>
        <position position="470"/>
    </location>
    <ligand>
        <name>L-glutamine</name>
        <dbReference type="ChEBI" id="CHEBI:58359"/>
    </ligand>
</feature>
<comment type="function">
    <text evidence="1">Catalyzes the ATP-dependent amination of UTP to CTP with either L-glutamine or ammonia as the source of nitrogen. Regulates intracellular CTP levels through interactions with the four ribonucleotide triphosphates.</text>
</comment>
<comment type="catalytic activity">
    <reaction evidence="1">
        <text>UTP + L-glutamine + ATP + H2O = CTP + L-glutamate + ADP + phosphate + 2 H(+)</text>
        <dbReference type="Rhea" id="RHEA:26426"/>
        <dbReference type="ChEBI" id="CHEBI:15377"/>
        <dbReference type="ChEBI" id="CHEBI:15378"/>
        <dbReference type="ChEBI" id="CHEBI:29985"/>
        <dbReference type="ChEBI" id="CHEBI:30616"/>
        <dbReference type="ChEBI" id="CHEBI:37563"/>
        <dbReference type="ChEBI" id="CHEBI:43474"/>
        <dbReference type="ChEBI" id="CHEBI:46398"/>
        <dbReference type="ChEBI" id="CHEBI:58359"/>
        <dbReference type="ChEBI" id="CHEBI:456216"/>
        <dbReference type="EC" id="6.3.4.2"/>
    </reaction>
</comment>
<comment type="catalytic activity">
    <reaction evidence="1">
        <text>L-glutamine + H2O = L-glutamate + NH4(+)</text>
        <dbReference type="Rhea" id="RHEA:15889"/>
        <dbReference type="ChEBI" id="CHEBI:15377"/>
        <dbReference type="ChEBI" id="CHEBI:28938"/>
        <dbReference type="ChEBI" id="CHEBI:29985"/>
        <dbReference type="ChEBI" id="CHEBI:58359"/>
    </reaction>
</comment>
<comment type="catalytic activity">
    <reaction evidence="1">
        <text>UTP + NH4(+) + ATP = CTP + ADP + phosphate + 2 H(+)</text>
        <dbReference type="Rhea" id="RHEA:16597"/>
        <dbReference type="ChEBI" id="CHEBI:15378"/>
        <dbReference type="ChEBI" id="CHEBI:28938"/>
        <dbReference type="ChEBI" id="CHEBI:30616"/>
        <dbReference type="ChEBI" id="CHEBI:37563"/>
        <dbReference type="ChEBI" id="CHEBI:43474"/>
        <dbReference type="ChEBI" id="CHEBI:46398"/>
        <dbReference type="ChEBI" id="CHEBI:456216"/>
    </reaction>
</comment>
<comment type="activity regulation">
    <text evidence="1">Allosterically activated by GTP, when glutamine is the substrate; GTP has no effect on the reaction when ammonia is the substrate. The allosteric effector GTP functions by stabilizing the protein conformation that binds the tetrahedral intermediate(s) formed during glutamine hydrolysis. Inhibited by the product CTP, via allosteric rather than competitive inhibition.</text>
</comment>
<comment type="pathway">
    <text evidence="1">Pyrimidine metabolism; CTP biosynthesis via de novo pathway; CTP from UDP: step 2/2.</text>
</comment>
<comment type="subunit">
    <text evidence="1">Homotetramer.</text>
</comment>
<comment type="miscellaneous">
    <text evidence="1">CTPSs have evolved a hybrid strategy for distinguishing between UTP and CTP. The overlapping regions of the product feedback inhibitory and substrate sites recognize a common feature in both compounds, the triphosphate moiety. To differentiate isosteric substrate and product pyrimidine rings, an additional pocket far from the expected kinase/ligase catalytic site, specifically recognizes the cytosine and ribose portions of the product inhibitor.</text>
</comment>
<comment type="similarity">
    <text evidence="1">Belongs to the CTP synthase family.</text>
</comment>
<comment type="sequence caution" evidence="2">
    <conflict type="erroneous initiation">
        <sequence resource="EMBL-CDS" id="BAC95583"/>
    </conflict>
</comment>
<keyword id="KW-0067">ATP-binding</keyword>
<keyword id="KW-0315">Glutamine amidotransferase</keyword>
<keyword id="KW-0436">Ligase</keyword>
<keyword id="KW-0460">Magnesium</keyword>
<keyword id="KW-0479">Metal-binding</keyword>
<keyword id="KW-0547">Nucleotide-binding</keyword>
<keyword id="KW-0665">Pyrimidine biosynthesis</keyword>
<name>PYRG_VIBVY</name>
<reference key="1">
    <citation type="journal article" date="2003" name="Genome Res.">
        <title>Comparative genome analysis of Vibrio vulnificus, a marine pathogen.</title>
        <authorList>
            <person name="Chen C.-Y."/>
            <person name="Wu K.-M."/>
            <person name="Chang Y.-C."/>
            <person name="Chang C.-H."/>
            <person name="Tsai H.-C."/>
            <person name="Liao T.-L."/>
            <person name="Liu Y.-M."/>
            <person name="Chen H.-J."/>
            <person name="Shen A.B.-T."/>
            <person name="Li J.-C."/>
            <person name="Su T.-L."/>
            <person name="Shao C.-P."/>
            <person name="Lee C.-T."/>
            <person name="Hor L.-I."/>
            <person name="Tsai S.-F."/>
        </authorList>
    </citation>
    <scope>NUCLEOTIDE SEQUENCE [LARGE SCALE GENOMIC DNA]</scope>
    <source>
        <strain>YJ016</strain>
    </source>
</reference>
<organism>
    <name type="scientific">Vibrio vulnificus (strain YJ016)</name>
    <dbReference type="NCBI Taxonomy" id="196600"/>
    <lineage>
        <taxon>Bacteria</taxon>
        <taxon>Pseudomonadati</taxon>
        <taxon>Pseudomonadota</taxon>
        <taxon>Gammaproteobacteria</taxon>
        <taxon>Vibrionales</taxon>
        <taxon>Vibrionaceae</taxon>
        <taxon>Vibrio</taxon>
    </lineage>
</organism>